<name>AVRP3_PSESH</name>
<proteinExistence type="evidence at protein level"/>
<feature type="chain" id="PRO_0000026577" description="7 kDa product">
    <location>
        <begin position="1"/>
        <end position="62"/>
    </location>
</feature>
<feature type="chain" id="PRO_0000026578" description="28 kDa product">
    <location>
        <begin position="63"/>
        <end position="267"/>
    </location>
</feature>
<feature type="active site">
    <location>
        <position position="98"/>
    </location>
</feature>
<feature type="active site">
    <location>
        <position position="212"/>
    </location>
</feature>
<feature type="active site">
    <location>
        <position position="227"/>
    </location>
</feature>
<feature type="site" description="Cleavage; by autolysis">
    <location>
        <begin position="62"/>
        <end position="63"/>
    </location>
</feature>
<feature type="lipid moiety-binding region" description="N-myristoyl glycine; by host" evidence="9">
    <location>
        <position position="63"/>
    </location>
</feature>
<feature type="mutagenesis site" description="Abolishes the localization to plasma membrane in host cells." evidence="1">
    <original>G</original>
    <variation>A</variation>
    <location>
        <position position="63"/>
    </location>
</feature>
<feature type="mutagenesis site" description="Prevents auto-cleavage and hypersensitive response in infected plants." evidence="3">
    <original>C</original>
    <variation>S</variation>
    <location>
        <position position="98"/>
    </location>
</feature>
<feature type="mutagenesis site" description="No effect." evidence="3">
    <original>Q</original>
    <variation>A</variation>
    <location>
        <position position="128"/>
    </location>
</feature>
<feature type="mutagenesis site" description="Prevents auto-cleavage and hypersensitive response in infected plants." evidence="3">
    <original>H</original>
    <variation>A</variation>
    <location>
        <position position="212"/>
    </location>
</feature>
<feature type="mutagenesis site" description="Prevents auto-cleavage and hypersensitive response in infected plants." evidence="3">
    <original>D</original>
    <variation>A</variation>
    <location>
        <position position="227"/>
    </location>
</feature>
<feature type="helix" evidence="10">
    <location>
        <begin position="82"/>
        <end position="85"/>
    </location>
</feature>
<feature type="strand" evidence="10">
    <location>
        <begin position="86"/>
        <end position="89"/>
    </location>
</feature>
<feature type="helix" evidence="10">
    <location>
        <begin position="98"/>
        <end position="107"/>
    </location>
</feature>
<feature type="turn" evidence="10">
    <location>
        <begin position="108"/>
        <end position="110"/>
    </location>
</feature>
<feature type="helix" evidence="10">
    <location>
        <begin position="114"/>
        <end position="121"/>
    </location>
</feature>
<feature type="helix" evidence="10">
    <location>
        <begin position="126"/>
        <end position="147"/>
    </location>
</feature>
<feature type="helix" evidence="10">
    <location>
        <begin position="153"/>
        <end position="164"/>
    </location>
</feature>
<feature type="strand" evidence="10">
    <location>
        <begin position="174"/>
        <end position="177"/>
    </location>
</feature>
<feature type="helix" evidence="10">
    <location>
        <begin position="182"/>
        <end position="193"/>
    </location>
</feature>
<feature type="strand" evidence="10">
    <location>
        <begin position="199"/>
        <end position="206"/>
    </location>
</feature>
<feature type="turn" evidence="10">
    <location>
        <begin position="207"/>
        <end position="209"/>
    </location>
</feature>
<feature type="strand" evidence="10">
    <location>
        <begin position="210"/>
        <end position="219"/>
    </location>
</feature>
<feature type="strand" evidence="10">
    <location>
        <begin position="222"/>
        <end position="227"/>
    </location>
</feature>
<feature type="turn" evidence="10">
    <location>
        <begin position="228"/>
        <end position="230"/>
    </location>
</feature>
<feature type="strand" evidence="10">
    <location>
        <begin position="231"/>
        <end position="236"/>
    </location>
</feature>
<feature type="turn" evidence="10">
    <location>
        <begin position="237"/>
        <end position="239"/>
    </location>
</feature>
<feature type="helix" evidence="10">
    <location>
        <begin position="240"/>
        <end position="253"/>
    </location>
</feature>
<feature type="strand" evidence="10">
    <location>
        <begin position="258"/>
        <end position="267"/>
    </location>
</feature>
<sequence>MKIGTQATSLAVLHNQESHAPQAPIAVRPEPAHAIPEIPLDLAIRPRTRGIHPFLAMTLGDKGCASSSGVSLEDDSHTQVSLSDFSVASRDVNHNNICAGLSTEWLVMSSDGDAESRMDHLDYNGEGQSRGSERHQVYNDALRAALSNDDEAPFFTASTAVIEDAGFSLRREPKTVHASGGSAQLGQTVAHDVAQSGRKHLLSLRFANVQGHAIACSCEGSQFKLFDPNLGEFQSSRSAAPQLIKGLIDHYNSLNYDVACVNEFRVS</sequence>
<protein>
    <recommendedName>
        <fullName>Cysteine protease avirulence protein AvrPphB</fullName>
        <ecNumber>3.4.22.-</ecNumber>
    </recommendedName>
    <component>
        <recommendedName>
            <fullName>7 kDa product</fullName>
        </recommendedName>
    </component>
    <component>
        <recommendedName>
            <fullName>28 kDa product</fullName>
        </recommendedName>
    </component>
</protein>
<evidence type="ECO:0000269" key="1">
    <source>
    </source>
</evidence>
<evidence type="ECO:0000269" key="2">
    <source>
    </source>
</evidence>
<evidence type="ECO:0000269" key="3">
    <source>
    </source>
</evidence>
<evidence type="ECO:0000269" key="4">
    <source>
    </source>
</evidence>
<evidence type="ECO:0000269" key="5">
    <source>
    </source>
</evidence>
<evidence type="ECO:0000269" key="6">
    <source>
    </source>
</evidence>
<evidence type="ECO:0000269" key="7">
    <source>
    </source>
</evidence>
<evidence type="ECO:0000305" key="8"/>
<evidence type="ECO:0000305" key="9">
    <source>
    </source>
</evidence>
<evidence type="ECO:0007829" key="10">
    <source>
        <dbReference type="PDB" id="1UKF"/>
    </source>
</evidence>
<comment type="function">
    <text evidence="2 5 6 7">Cysteine protease avirulence protein, which is essential during infection of plant cells from cultivar-specific of beans and Arabidopsis thaliana. The autocleavage of the protein is required for virulence function. May act by affecting the plant defense system. In plants lacking R3 or RPS5 resistance genes, it probably impairs the plant defense system and leads to the bacteria multiplication. In contrast, in plants containing the R3 or RPS5 protein, it is unable to induce disease symptoms, explaining its avirulence name. The 7 kDa product is required for the type-III translocation from Pseudomonas strains to the plant, but are partially dispensable for effector recognition following in planta expression. In infected plants, it acts by cleaving the PBS1 protein, which leads to resistance or disease, depending on the presence or absence of RPS5, respectively (PubMed:11952132, PubMed:17277084). Targets the Arabidopsis kinases PBS1, BIK1, PBL1, PBL2, PBL3, PBL5, PBL7, PBL9 and PBL11 for cleavage in vitro (PubMed:20413097). Can block recognition of AvrB avirulence factor by plant cells by cleaving Arabidopsis RIPK kinase and suppressing Arabidopsis RPM1 activation. Cannot block AvrRpm1-induced activation of RPM1 (PubMed:25625821).</text>
</comment>
<comment type="subunit">
    <text evidence="4">In infected plant cells, the 28 kDa product interacts with PBS1.</text>
</comment>
<comment type="subcellular location">
    <subcellularLocation>
        <location evidence="1">Secreted</location>
    </subcellularLocation>
    <subcellularLocation>
        <location evidence="1">Host membrane</location>
    </subcellularLocation>
    <text>In infected plant cells, it is membrane-associated.</text>
</comment>
<comment type="PTM">
    <text evidence="1">Autocleaved. This function is essential for myristoylation in infected plant cell and for eliciting the plant hypersensitive response.</text>
</comment>
<comment type="PTM">
    <text evidence="9">Myristoylation of 28 kDa product in infected plant cells; it mediates the localization to membranes.</text>
</comment>
<comment type="similarity">
    <text evidence="8">Belongs to the peptidase C58 family.</text>
</comment>
<dbReference type="EC" id="3.4.22.-"/>
<dbReference type="EMBL" id="M86401">
    <property type="protein sequence ID" value="AAA25727.1"/>
    <property type="molecule type" value="Genomic_DNA"/>
</dbReference>
<dbReference type="PIR" id="S28670">
    <property type="entry name" value="S28670"/>
</dbReference>
<dbReference type="PDB" id="1UKF">
    <property type="method" value="X-ray"/>
    <property type="resolution" value="1.35 A"/>
    <property type="chains" value="A=81-267"/>
</dbReference>
<dbReference type="PDBsum" id="1UKF"/>
<dbReference type="SMR" id="Q52430"/>
<dbReference type="DIP" id="DIP-60863N"/>
<dbReference type="IntAct" id="Q52430">
    <property type="interactions" value="1"/>
</dbReference>
<dbReference type="MEROPS" id="C58.002"/>
<dbReference type="iPTMnet" id="Q52430"/>
<dbReference type="KEGG" id="ag:AAA25727"/>
<dbReference type="EvolutionaryTrace" id="Q52430"/>
<dbReference type="PHI-base" id="PHI:993"/>
<dbReference type="GO" id="GO:0005576">
    <property type="term" value="C:extracellular region"/>
    <property type="evidence" value="ECO:0007669"/>
    <property type="project" value="UniProtKB-SubCell"/>
</dbReference>
<dbReference type="GO" id="GO:0033644">
    <property type="term" value="C:host cell membrane"/>
    <property type="evidence" value="ECO:0007669"/>
    <property type="project" value="UniProtKB-SubCell"/>
</dbReference>
<dbReference type="GO" id="GO:0016020">
    <property type="term" value="C:membrane"/>
    <property type="evidence" value="ECO:0007669"/>
    <property type="project" value="UniProtKB-KW"/>
</dbReference>
<dbReference type="GO" id="GO:0004197">
    <property type="term" value="F:cysteine-type endopeptidase activity"/>
    <property type="evidence" value="ECO:0007669"/>
    <property type="project" value="InterPro"/>
</dbReference>
<dbReference type="GO" id="GO:0006508">
    <property type="term" value="P:proteolysis"/>
    <property type="evidence" value="ECO:0007669"/>
    <property type="project" value="UniProtKB-KW"/>
</dbReference>
<dbReference type="GO" id="GO:0052040">
    <property type="term" value="P:symbiont-mediated perturbation of host programmed cell death"/>
    <property type="evidence" value="ECO:0007669"/>
    <property type="project" value="UniProtKB-KW"/>
</dbReference>
<dbReference type="CDD" id="cd20497">
    <property type="entry name" value="C58_YopT-like"/>
    <property type="match status" value="1"/>
</dbReference>
<dbReference type="Gene3D" id="3.90.70.20">
    <property type="match status" value="1"/>
</dbReference>
<dbReference type="InterPro" id="IPR038765">
    <property type="entry name" value="Papain-like_cys_pep_sf"/>
</dbReference>
<dbReference type="InterPro" id="IPR006473">
    <property type="entry name" value="Peptidase_C58_Yopt"/>
</dbReference>
<dbReference type="NCBIfam" id="TIGR01586">
    <property type="entry name" value="yopT_cys_prot"/>
    <property type="match status" value="1"/>
</dbReference>
<dbReference type="Pfam" id="PF03543">
    <property type="entry name" value="Peptidase_C58"/>
    <property type="match status" value="1"/>
</dbReference>
<dbReference type="SUPFAM" id="SSF54001">
    <property type="entry name" value="Cysteine proteinases"/>
    <property type="match status" value="1"/>
</dbReference>
<reference key="1">
    <citation type="journal article" date="1991" name="Mol. Plant Microbe Interact.">
        <title>Gene-for-gene interactions between Pseudomonas syringae pv. phaseolicola and Phaseolus.</title>
        <authorList>
            <person name="Jenner C."/>
            <person name="Hitchin E."/>
            <person name="Mansfield J."/>
            <person name="Walters K."/>
            <person name="Betteridge P."/>
            <person name="Teverson D."/>
            <person name="Taylor J."/>
        </authorList>
    </citation>
    <scope>NUCLEOTIDE SEQUENCE [GENOMIC DNA]</scope>
    <source>
        <strain>1301A / Race 3</strain>
        <strain>1302A / Race 4</strain>
    </source>
</reference>
<reference key="2">
    <citation type="journal article" date="1997" name="Mol. Plant Microbe Interact.">
        <title>Expression of avrPphB, an avirulence gene from Pseudomonas syringae pv. phaseolicola, and the delivery of signals causing the hypersensitive reaction in bean.</title>
        <authorList>
            <person name="Puri N."/>
            <person name="Jenner C."/>
            <person name="Bennett M."/>
            <person name="Stewart R."/>
            <person name="Mansfield J."/>
            <person name="Lyons N."/>
            <person name="Taylor J."/>
        </authorList>
    </citation>
    <scope>AUTOCATALYTIC CLEAVAGE</scope>
</reference>
<reference key="3">
    <citation type="journal article" date="2000" name="Cell">
        <title>Eukaryotic fatty acylation drives plasma membrane targeting and enhances function of several type III effector proteins from Pseudomonas syringae.</title>
        <authorList>
            <person name="Nimchuk Z."/>
            <person name="Marois E."/>
            <person name="Kjemtrup S."/>
            <person name="Leister R.T."/>
            <person name="Katagiri F."/>
            <person name="Dangl J.L."/>
        </authorList>
    </citation>
    <scope>SUBCELLULAR LOCATION</scope>
    <scope>MYRISTOYLATION AT GLY-63</scope>
    <scope>MUTAGENESIS OF GLY-63</scope>
</reference>
<reference key="4">
    <citation type="journal article" date="2002" name="Mol. Plant Microbe Interact.">
        <title>Molecular determinants required for the avirulence function of AvrPphB in bean and other plants.</title>
        <authorList>
            <person name="Tampakaki A.P."/>
            <person name="Bastaki M."/>
            <person name="Mansfield J.W."/>
            <person name="Panopoulos N.J."/>
        </authorList>
    </citation>
    <scope>FUNCTION OF THE 7 KDA CLEAVAGE PRODUCT</scope>
</reference>
<reference key="5">
    <citation type="journal article" date="2002" name="Cell">
        <title>A Yersinia effector and a Pseudomonas avirulence protein define a family of cysteine proteases functioning in bacterial pathogenesis.</title>
        <authorList>
            <person name="Shao F."/>
            <person name="Merritt P.M."/>
            <person name="Bao Z."/>
            <person name="Innes R.W."/>
            <person name="Dixon J.E."/>
        </authorList>
    </citation>
    <scope>AUTOCATALYTIC CLEAVAGE</scope>
    <scope>MUTAGENESIS OF CYS-98; GLN-128; HIS-212 AND ASP-227</scope>
</reference>
<reference key="6">
    <citation type="journal article" date="2003" name="Science">
        <title>Cleavage of Arabidopsis PBS1 by a bacterial type III effector.</title>
        <authorList>
            <person name="Shao F."/>
            <person name="Golstein C."/>
            <person name="Ade J."/>
            <person name="Stoutemyer M."/>
            <person name="Dixon J.E."/>
            <person name="Innes R.W."/>
        </authorList>
    </citation>
    <scope>INTERACTION WITH PBS1</scope>
    <scope>CLEAVAGE OF PBS1</scope>
</reference>
<reference key="7">
    <citation type="journal article" date="2007" name="Proc. Natl. Acad. Sci. U.S.A.">
        <title>Indirect activation of a plant nucleotide binding site-leucine-rich repeat protein by a bacterial protease.</title>
        <authorList>
            <person name="Ade J."/>
            <person name="DeYoung B.J."/>
            <person name="Golstein C."/>
            <person name="Innes R.W."/>
        </authorList>
    </citation>
    <scope>FUNCTION</scope>
</reference>
<reference key="8">
    <citation type="journal article" date="2010" name="Cell Host Microbe">
        <title>Receptor-like cytoplasmic kinases integrate signaling from multiple plant immune receptors and are targeted by a Pseudomonas syringae effector.</title>
        <authorList>
            <person name="Zhang J."/>
            <person name="Li W."/>
            <person name="Xiang T."/>
            <person name="Liu Z."/>
            <person name="Laluk K."/>
            <person name="Ding X."/>
            <person name="Zou Y."/>
            <person name="Gao M."/>
            <person name="Zhang X."/>
            <person name="Chen S."/>
            <person name="Mengiste T."/>
            <person name="Zhang Y."/>
            <person name="Zhou J.M."/>
        </authorList>
    </citation>
    <scope>FUNCTION</scope>
</reference>
<reference key="9">
    <citation type="journal article" date="2015" name="Mol. Plant Microbe Interact.">
        <title>Pseudomonas syringae effector AvrPphB suppresses AvrB-induced activation of RPM1 but not AvrRpm1-induced activation.</title>
        <authorList>
            <person name="Russell A.R."/>
            <person name="Ashfield T."/>
            <person name="Innes R.W."/>
        </authorList>
    </citation>
    <scope>FUNCTION</scope>
</reference>
<reference key="10">
    <citation type="journal article" date="2004" name="Proc. Natl. Acad. Sci. U.S.A.">
        <title>The crystal structure of Pseudomonas avirulence protein AvrPphB: a papain-like fold with a distinct substrate-binding site.</title>
        <authorList>
            <person name="Zhu M."/>
            <person name="Shao F."/>
            <person name="Innes R.W."/>
            <person name="Dixon J.E."/>
            <person name="Xu Z."/>
        </authorList>
    </citation>
    <scope>X-RAY CRYSTALLOGRAPHY (1.35 ANGSTROMS) OF 81-268</scope>
</reference>
<keyword id="KW-0002">3D-structure</keyword>
<keyword id="KW-0068">Autocatalytic cleavage</keyword>
<keyword id="KW-1043">Host membrane</keyword>
<keyword id="KW-0378">Hydrolase</keyword>
<keyword id="KW-0928">Hypersensitive response elicitation</keyword>
<keyword id="KW-0449">Lipoprotein</keyword>
<keyword id="KW-0472">Membrane</keyword>
<keyword id="KW-0519">Myristate</keyword>
<keyword id="KW-0645">Protease</keyword>
<keyword id="KW-0964">Secreted</keyword>
<keyword id="KW-0788">Thiol protease</keyword>
<keyword id="KW-0843">Virulence</keyword>
<gene>
    <name type="primary">avrPph3</name>
</gene>
<organism>
    <name type="scientific">Pseudomonas savastanoi pv. phaseolicola</name>
    <name type="common">Pseudomonas syringae pv. phaseolicola</name>
    <dbReference type="NCBI Taxonomy" id="319"/>
    <lineage>
        <taxon>Bacteria</taxon>
        <taxon>Pseudomonadati</taxon>
        <taxon>Pseudomonadota</taxon>
        <taxon>Gammaproteobacteria</taxon>
        <taxon>Pseudomonadales</taxon>
        <taxon>Pseudomonadaceae</taxon>
        <taxon>Pseudomonas</taxon>
    </lineage>
</organism>
<accession>Q52430</accession>